<comment type="function">
    <text evidence="1">May function as a negative regulator of NF-kappa-B by preventing RELA/p65 phosphorylation at 'Ser-536', thereby inhibiting its transcriptional activity. Through NF-kappa-B regulation may control cytokine release upon Toll-like receptors activation and therefore play a role in modulation of innate immunity. May also play a role in cell cycle progression and apoptotic process.</text>
</comment>
<comment type="subcellular location">
    <subcellularLocation>
        <location evidence="1">Cytoplasm</location>
    </subcellularLocation>
    <subcellularLocation>
        <location evidence="1">Nucleus</location>
    </subcellularLocation>
    <text evidence="1">Targeted to the nucleus upon TNF-alpha treatment.</text>
</comment>
<comment type="tissue specificity">
    <text evidence="1">Expressed in all tissues tested, including spleen, lymph node, thymus, tonsil, peripheral blood leukocyte, bone marrow, liver, heart, brain, placenta, lung, skeletal muscle, kidney and pancreas.</text>
</comment>
<comment type="developmental stage">
    <text evidence="1">Expressed in fetal liver.</text>
</comment>
<comment type="induction">
    <text evidence="1">Up-regulated by inflammatory stimulus (LPS).</text>
</comment>
<comment type="caution">
    <text evidence="4">Likely derived from retrogene insertion of an NLRP2/NLRP7-like gene, it was originally considered a pseudogene. However, it turns out to be functional and under purifying selection.</text>
</comment>
<reference key="1">
    <citation type="journal article" date="2014" name="Genes Immun.">
        <title>The CLRX.1/NOD24 (NLRP2P) pseudogene codes a functional negative regulator of NF-kappaB, pyrin-only protein 4.</title>
        <authorList>
            <person name="Porter K.A."/>
            <person name="Duffy E.B."/>
            <person name="Nyland P."/>
            <person name="Atianand M.K."/>
            <person name="Sharifi H."/>
            <person name="Harton J.A."/>
        </authorList>
    </citation>
    <scope>NUCLEOTIDE SEQUENCE [MRNA]</scope>
    <scope>FUNCTION</scope>
    <scope>SUBCELLULAR LOCATION</scope>
    <scope>INDUCTION BY LPS</scope>
    <scope>TISSUE SPECIFICITY</scope>
    <scope>DEVELOPMENTAL STAGE</scope>
</reference>
<reference key="2">
    <citation type="journal article" date="2005" name="Nature">
        <title>The DNA sequence of the human X chromosome.</title>
        <authorList>
            <person name="Ross M.T."/>
            <person name="Grafham D.V."/>
            <person name="Coffey A.J."/>
            <person name="Scherer S."/>
            <person name="McLay K."/>
            <person name="Muzny D."/>
            <person name="Platzer M."/>
            <person name="Howell G.R."/>
            <person name="Burrows C."/>
            <person name="Bird C.P."/>
            <person name="Frankish A."/>
            <person name="Lovell F.L."/>
            <person name="Howe K.L."/>
            <person name="Ashurst J.L."/>
            <person name="Fulton R.S."/>
            <person name="Sudbrak R."/>
            <person name="Wen G."/>
            <person name="Jones M.C."/>
            <person name="Hurles M.E."/>
            <person name="Andrews T.D."/>
            <person name="Scott C.E."/>
            <person name="Searle S."/>
            <person name="Ramser J."/>
            <person name="Whittaker A."/>
            <person name="Deadman R."/>
            <person name="Carter N.P."/>
            <person name="Hunt S.E."/>
            <person name="Chen R."/>
            <person name="Cree A."/>
            <person name="Gunaratne P."/>
            <person name="Havlak P."/>
            <person name="Hodgson A."/>
            <person name="Metzker M.L."/>
            <person name="Richards S."/>
            <person name="Scott G."/>
            <person name="Steffen D."/>
            <person name="Sodergren E."/>
            <person name="Wheeler D.A."/>
            <person name="Worley K.C."/>
            <person name="Ainscough R."/>
            <person name="Ambrose K.D."/>
            <person name="Ansari-Lari M.A."/>
            <person name="Aradhya S."/>
            <person name="Ashwell R.I."/>
            <person name="Babbage A.K."/>
            <person name="Bagguley C.L."/>
            <person name="Ballabio A."/>
            <person name="Banerjee R."/>
            <person name="Barker G.E."/>
            <person name="Barlow K.F."/>
            <person name="Barrett I.P."/>
            <person name="Bates K.N."/>
            <person name="Beare D.M."/>
            <person name="Beasley H."/>
            <person name="Beasley O."/>
            <person name="Beck A."/>
            <person name="Bethel G."/>
            <person name="Blechschmidt K."/>
            <person name="Brady N."/>
            <person name="Bray-Allen S."/>
            <person name="Bridgeman A.M."/>
            <person name="Brown A.J."/>
            <person name="Brown M.J."/>
            <person name="Bonnin D."/>
            <person name="Bruford E.A."/>
            <person name="Buhay C."/>
            <person name="Burch P."/>
            <person name="Burford D."/>
            <person name="Burgess J."/>
            <person name="Burrill W."/>
            <person name="Burton J."/>
            <person name="Bye J.M."/>
            <person name="Carder C."/>
            <person name="Carrel L."/>
            <person name="Chako J."/>
            <person name="Chapman J.C."/>
            <person name="Chavez D."/>
            <person name="Chen E."/>
            <person name="Chen G."/>
            <person name="Chen Y."/>
            <person name="Chen Z."/>
            <person name="Chinault C."/>
            <person name="Ciccodicola A."/>
            <person name="Clark S.Y."/>
            <person name="Clarke G."/>
            <person name="Clee C.M."/>
            <person name="Clegg S."/>
            <person name="Clerc-Blankenburg K."/>
            <person name="Clifford K."/>
            <person name="Cobley V."/>
            <person name="Cole C.G."/>
            <person name="Conquer J.S."/>
            <person name="Corby N."/>
            <person name="Connor R.E."/>
            <person name="David R."/>
            <person name="Davies J."/>
            <person name="Davis C."/>
            <person name="Davis J."/>
            <person name="Delgado O."/>
            <person name="Deshazo D."/>
            <person name="Dhami P."/>
            <person name="Ding Y."/>
            <person name="Dinh H."/>
            <person name="Dodsworth S."/>
            <person name="Draper H."/>
            <person name="Dugan-Rocha S."/>
            <person name="Dunham A."/>
            <person name="Dunn M."/>
            <person name="Durbin K.J."/>
            <person name="Dutta I."/>
            <person name="Eades T."/>
            <person name="Ellwood M."/>
            <person name="Emery-Cohen A."/>
            <person name="Errington H."/>
            <person name="Evans K.L."/>
            <person name="Faulkner L."/>
            <person name="Francis F."/>
            <person name="Frankland J."/>
            <person name="Fraser A.E."/>
            <person name="Galgoczy P."/>
            <person name="Gilbert J."/>
            <person name="Gill R."/>
            <person name="Gloeckner G."/>
            <person name="Gregory S.G."/>
            <person name="Gribble S."/>
            <person name="Griffiths C."/>
            <person name="Grocock R."/>
            <person name="Gu Y."/>
            <person name="Gwilliam R."/>
            <person name="Hamilton C."/>
            <person name="Hart E.A."/>
            <person name="Hawes A."/>
            <person name="Heath P.D."/>
            <person name="Heitmann K."/>
            <person name="Hennig S."/>
            <person name="Hernandez J."/>
            <person name="Hinzmann B."/>
            <person name="Ho S."/>
            <person name="Hoffs M."/>
            <person name="Howden P.J."/>
            <person name="Huckle E.J."/>
            <person name="Hume J."/>
            <person name="Hunt P.J."/>
            <person name="Hunt A.R."/>
            <person name="Isherwood J."/>
            <person name="Jacob L."/>
            <person name="Johnson D."/>
            <person name="Jones S."/>
            <person name="de Jong P.J."/>
            <person name="Joseph S.S."/>
            <person name="Keenan S."/>
            <person name="Kelly S."/>
            <person name="Kershaw J.K."/>
            <person name="Khan Z."/>
            <person name="Kioschis P."/>
            <person name="Klages S."/>
            <person name="Knights A.J."/>
            <person name="Kosiura A."/>
            <person name="Kovar-Smith C."/>
            <person name="Laird G.K."/>
            <person name="Langford C."/>
            <person name="Lawlor S."/>
            <person name="Leversha M."/>
            <person name="Lewis L."/>
            <person name="Liu W."/>
            <person name="Lloyd C."/>
            <person name="Lloyd D.M."/>
            <person name="Loulseged H."/>
            <person name="Loveland J.E."/>
            <person name="Lovell J.D."/>
            <person name="Lozado R."/>
            <person name="Lu J."/>
            <person name="Lyne R."/>
            <person name="Ma J."/>
            <person name="Maheshwari M."/>
            <person name="Matthews L.H."/>
            <person name="McDowall J."/>
            <person name="McLaren S."/>
            <person name="McMurray A."/>
            <person name="Meidl P."/>
            <person name="Meitinger T."/>
            <person name="Milne S."/>
            <person name="Miner G."/>
            <person name="Mistry S.L."/>
            <person name="Morgan M."/>
            <person name="Morris S."/>
            <person name="Mueller I."/>
            <person name="Mullikin J.C."/>
            <person name="Nguyen N."/>
            <person name="Nordsiek G."/>
            <person name="Nyakatura G."/>
            <person name="O'dell C.N."/>
            <person name="Okwuonu G."/>
            <person name="Palmer S."/>
            <person name="Pandian R."/>
            <person name="Parker D."/>
            <person name="Parrish J."/>
            <person name="Pasternak S."/>
            <person name="Patel D."/>
            <person name="Pearce A.V."/>
            <person name="Pearson D.M."/>
            <person name="Pelan S.E."/>
            <person name="Perez L."/>
            <person name="Porter K.M."/>
            <person name="Ramsey Y."/>
            <person name="Reichwald K."/>
            <person name="Rhodes S."/>
            <person name="Ridler K.A."/>
            <person name="Schlessinger D."/>
            <person name="Schueler M.G."/>
            <person name="Sehra H.K."/>
            <person name="Shaw-Smith C."/>
            <person name="Shen H."/>
            <person name="Sheridan E.M."/>
            <person name="Shownkeen R."/>
            <person name="Skuce C.D."/>
            <person name="Smith M.L."/>
            <person name="Sotheran E.C."/>
            <person name="Steingruber H.E."/>
            <person name="Steward C.A."/>
            <person name="Storey R."/>
            <person name="Swann R.M."/>
            <person name="Swarbreck D."/>
            <person name="Tabor P.E."/>
            <person name="Taudien S."/>
            <person name="Taylor T."/>
            <person name="Teague B."/>
            <person name="Thomas K."/>
            <person name="Thorpe A."/>
            <person name="Timms K."/>
            <person name="Tracey A."/>
            <person name="Trevanion S."/>
            <person name="Tromans A.C."/>
            <person name="d'Urso M."/>
            <person name="Verduzco D."/>
            <person name="Villasana D."/>
            <person name="Waldron L."/>
            <person name="Wall M."/>
            <person name="Wang Q."/>
            <person name="Warren J."/>
            <person name="Warry G.L."/>
            <person name="Wei X."/>
            <person name="West A."/>
            <person name="Whitehead S.L."/>
            <person name="Whiteley M.N."/>
            <person name="Wilkinson J.E."/>
            <person name="Willey D.L."/>
            <person name="Williams G."/>
            <person name="Williams L."/>
            <person name="Williamson A."/>
            <person name="Williamson H."/>
            <person name="Wilming L."/>
            <person name="Woodmansey R.L."/>
            <person name="Wray P.W."/>
            <person name="Yen J."/>
            <person name="Zhang J."/>
            <person name="Zhou J."/>
            <person name="Zoghbi H."/>
            <person name="Zorilla S."/>
            <person name="Buck D."/>
            <person name="Reinhardt R."/>
            <person name="Poustka A."/>
            <person name="Rosenthal A."/>
            <person name="Lehrach H."/>
            <person name="Meindl A."/>
            <person name="Minx P.J."/>
            <person name="Hillier L.W."/>
            <person name="Willard H.F."/>
            <person name="Wilson R.K."/>
            <person name="Waterston R.H."/>
            <person name="Rice C.M."/>
            <person name="Vaudin M."/>
            <person name="Coulson A."/>
            <person name="Nelson D.L."/>
            <person name="Weinstock G."/>
            <person name="Sulston J.E."/>
            <person name="Durbin R.M."/>
            <person name="Hubbard T."/>
            <person name="Gibbs R.A."/>
            <person name="Beck S."/>
            <person name="Rogers J."/>
            <person name="Bentley D.R."/>
        </authorList>
    </citation>
    <scope>NUCLEOTIDE SEQUENCE [LARGE SCALE GENOMIC DNA]</scope>
</reference>
<proteinExistence type="evidence at transcript level"/>
<protein>
    <recommendedName>
        <fullName evidence="5">NLR family pyrin domain-containing protein 2B</fullName>
    </recommendedName>
    <alternativeName>
        <fullName evidence="3">Pyrin domain-containing protein 2-like protein POP4</fullName>
    </alternativeName>
    <alternativeName>
        <fullName evidence="2">Pyrin-only protein 4</fullName>
    </alternativeName>
</protein>
<keyword id="KW-0963">Cytoplasm</keyword>
<keyword id="KW-0391">Immunity</keyword>
<keyword id="KW-0399">Innate immunity</keyword>
<keyword id="KW-0539">Nucleus</keyword>
<keyword id="KW-1185">Reference proteome</keyword>
<keyword id="KW-0734">Signal transduction inhibitor</keyword>
<sequence>MVSSAQLDFNLQALLGQLSQDDLCKFKSLIRTVSLGNELQKIPQT</sequence>
<gene>
    <name evidence="5" type="primary">NLRP2B</name>
    <name evidence="2" type="synonym">CLRX.1</name>
    <name evidence="5" type="synonym">NLRP2P</name>
    <name evidence="2" type="synonym">NOD24</name>
    <name evidence="2" type="synonym">POP4</name>
</gene>
<feature type="chain" id="PRO_0000433153" description="NLR family pyrin domain-containing protein 2B">
    <location>
        <begin position="1"/>
        <end position="45"/>
    </location>
</feature>
<name>PYDC4_HUMAN</name>
<evidence type="ECO:0000269" key="1">
    <source>
    </source>
</evidence>
<evidence type="ECO:0000303" key="2">
    <source>
    </source>
</evidence>
<evidence type="ECO:0000305" key="3"/>
<evidence type="ECO:0000305" key="4">
    <source>
    </source>
</evidence>
<evidence type="ECO:0000312" key="5">
    <source>
        <dbReference type="HGNC" id="HGNC:29887"/>
    </source>
</evidence>
<organism>
    <name type="scientific">Homo sapiens</name>
    <name type="common">Human</name>
    <dbReference type="NCBI Taxonomy" id="9606"/>
    <lineage>
        <taxon>Eukaryota</taxon>
        <taxon>Metazoa</taxon>
        <taxon>Chordata</taxon>
        <taxon>Craniata</taxon>
        <taxon>Vertebrata</taxon>
        <taxon>Euteleostomi</taxon>
        <taxon>Mammalia</taxon>
        <taxon>Eutheria</taxon>
        <taxon>Euarchontoglires</taxon>
        <taxon>Primates</taxon>
        <taxon>Haplorrhini</taxon>
        <taxon>Catarrhini</taxon>
        <taxon>Hominidae</taxon>
        <taxon>Homo</taxon>
    </lineage>
</organism>
<accession>P0DMW2</accession>
<dbReference type="EMBL" id="AL807813">
    <property type="status" value="NOT_ANNOTATED_CDS"/>
    <property type="molecule type" value="Genomic_DNA"/>
</dbReference>
<dbReference type="CCDS" id="CCDS83476.1"/>
<dbReference type="RefSeq" id="NP_001306896.1">
    <property type="nucleotide sequence ID" value="NM_001319967.1"/>
</dbReference>
<dbReference type="SMR" id="P0DMW2"/>
<dbReference type="STRING" id="9606.ENSP00000488995"/>
<dbReference type="BioMuta" id="NLRP2B"/>
<dbReference type="DNASU" id="286430"/>
<dbReference type="Ensembl" id="ENST00000434992.1">
    <property type="protein sequence ID" value="ENSP00000488995.1"/>
    <property type="gene ID" value="ENSG00000215174.2"/>
</dbReference>
<dbReference type="GeneID" id="286430"/>
<dbReference type="KEGG" id="hsa:286430"/>
<dbReference type="MANE-Select" id="ENST00000434992.1">
    <property type="protein sequence ID" value="ENSP00000488995.1"/>
    <property type="RefSeq nucleotide sequence ID" value="NM_001319967.1"/>
    <property type="RefSeq protein sequence ID" value="NP_001306896.1"/>
</dbReference>
<dbReference type="AGR" id="HGNC:29887"/>
<dbReference type="CTD" id="286430"/>
<dbReference type="GeneCards" id="NLRP2B"/>
<dbReference type="HGNC" id="HGNC:29887">
    <property type="gene designation" value="NLRP2B"/>
</dbReference>
<dbReference type="HPA" id="ENSG00000215174">
    <property type="expression patterns" value="Not detected"/>
</dbReference>
<dbReference type="neXtProt" id="NX_P0DMW2"/>
<dbReference type="OpenTargets" id="ENSG00000215174"/>
<dbReference type="VEuPathDB" id="HostDB:ENSG00000215174"/>
<dbReference type="GeneTree" id="ENSGT00940000167523"/>
<dbReference type="InParanoid" id="P0DMW2"/>
<dbReference type="OrthoDB" id="9479775at2759"/>
<dbReference type="PAN-GO" id="P0DMW2">
    <property type="GO annotations" value="5 GO annotations based on evolutionary models"/>
</dbReference>
<dbReference type="BioGRID-ORCS" id="286430">
    <property type="hits" value="0 hits in 11 CRISPR screens"/>
</dbReference>
<dbReference type="GenomeRNAi" id="286430"/>
<dbReference type="Pharos" id="P0DMW2">
    <property type="development level" value="Tbio"/>
</dbReference>
<dbReference type="PRO" id="PR:P0DMW2"/>
<dbReference type="Proteomes" id="UP000005640">
    <property type="component" value="Chromosome X"/>
</dbReference>
<dbReference type="Bgee" id="ENSG00000215174">
    <property type="expression patterns" value="Expressed in buccal mucosa cell and 3 other cell types or tissues"/>
</dbReference>
<dbReference type="GO" id="GO:0005737">
    <property type="term" value="C:cytoplasm"/>
    <property type="evidence" value="ECO:0000314"/>
    <property type="project" value="UniProtKB"/>
</dbReference>
<dbReference type="GO" id="GO:0005634">
    <property type="term" value="C:nucleus"/>
    <property type="evidence" value="ECO:0000314"/>
    <property type="project" value="UniProtKB"/>
</dbReference>
<dbReference type="GO" id="GO:0045087">
    <property type="term" value="P:innate immune response"/>
    <property type="evidence" value="ECO:0007669"/>
    <property type="project" value="UniProtKB-KW"/>
</dbReference>
<dbReference type="GO" id="GO:0045786">
    <property type="term" value="P:negative regulation of cell cycle"/>
    <property type="evidence" value="ECO:0000315"/>
    <property type="project" value="UniProtKB"/>
</dbReference>
<dbReference type="GO" id="GO:0032088">
    <property type="term" value="P:negative regulation of NF-kappaB transcription factor activity"/>
    <property type="evidence" value="ECO:0000315"/>
    <property type="project" value="UniProtKB"/>
</dbReference>
<dbReference type="GO" id="GO:0033137">
    <property type="term" value="P:negative regulation of peptidyl-serine phosphorylation"/>
    <property type="evidence" value="ECO:0000315"/>
    <property type="project" value="UniProtKB"/>
</dbReference>
<dbReference type="GO" id="GO:0034122">
    <property type="term" value="P:negative regulation of toll-like receptor signaling pathway"/>
    <property type="evidence" value="ECO:0000315"/>
    <property type="project" value="UniProtKB"/>
</dbReference>
<dbReference type="GO" id="GO:0010804">
    <property type="term" value="P:negative regulation of tumor necrosis factor-mediated signaling pathway"/>
    <property type="evidence" value="ECO:0000315"/>
    <property type="project" value="UniProtKB"/>
</dbReference>
<dbReference type="GO" id="GO:0043065">
    <property type="term" value="P:positive regulation of apoptotic process"/>
    <property type="evidence" value="ECO:0000315"/>
    <property type="project" value="UniProtKB"/>
</dbReference>
<dbReference type="Gene3D" id="1.10.533.10">
    <property type="entry name" value="Death Domain, Fas"/>
    <property type="match status" value="1"/>
</dbReference>
<dbReference type="InterPro" id="IPR011029">
    <property type="entry name" value="DEATH-like_dom_sf"/>
</dbReference>
<dbReference type="SUPFAM" id="SSF47986">
    <property type="entry name" value="DEATH domain"/>
    <property type="match status" value="1"/>
</dbReference>